<sequence length="605" mass="67965">MNIEQLKERQKCIRNFSIIAHIDHGKSTLADRILEFTGTIDKRIMKEQILDSMDLERERGITIKLNAVEINYQSKDGKNYIMHLIDTPGHVDFSYEVSRSLAACEGALLIIDASQGIQAQTLANVYLAVENNLTLIPVLNKVDLPSADVPKVKEEIKETLGLDPEKALIASGKTGLGVIDILEQIVTRISPPQGDIQKPLQALIFDSYFDSYKGVVPSIRIVNGTVKKGDQIRFMASNSVYEVVEVGVYNPKQIVKDFLAPGDVGYITAAIKSINHVRVGDTITSQTNQALLPLLGYKQMNSVVFCGLYPVETNKYDILKEALEKLKLNDSSLIFEPESSNALGLGFRTGFLGLLHMEIIQERISREFGVEVIATAPSVIYHVYSTKGEKFLVDNPSKLPSTQMIDRIEEPFIKATIMCPEIYIGKVMKLSQNKRGALQNIEYIDSQRVMINYLLPFSEIIYSYFDKLKSLTKGYASFDYEIDKYRVSKLQKMDILLNGEIVDALSLIVHHDFAYERGKAICETLKEFIPKQMFEIPIQAALGKKIIARQTIKAMRKDVTAKLYGGDVTRKKKLLEKQKKGKKKMKTLGKVQLPQKAFLAILATK</sequence>
<comment type="function">
    <text evidence="1">Required for accurate and efficient protein synthesis under certain stress conditions. May act as a fidelity factor of the translation reaction, by catalyzing a one-codon backward translocation of tRNAs on improperly translocated ribosomes. Back-translocation proceeds from a post-translocation (POST) complex to a pre-translocation (PRE) complex, thus giving elongation factor G a second chance to translocate the tRNAs correctly. Binds to ribosomes in a GTP-dependent manner.</text>
</comment>
<comment type="catalytic activity">
    <reaction evidence="1">
        <text>GTP + H2O = GDP + phosphate + H(+)</text>
        <dbReference type="Rhea" id="RHEA:19669"/>
        <dbReference type="ChEBI" id="CHEBI:15377"/>
        <dbReference type="ChEBI" id="CHEBI:15378"/>
        <dbReference type="ChEBI" id="CHEBI:37565"/>
        <dbReference type="ChEBI" id="CHEBI:43474"/>
        <dbReference type="ChEBI" id="CHEBI:58189"/>
        <dbReference type="EC" id="3.6.5.n1"/>
    </reaction>
</comment>
<comment type="subcellular location">
    <subcellularLocation>
        <location evidence="1">Cell membrane</location>
        <topology evidence="1">Peripheral membrane protein</topology>
        <orientation evidence="1">Cytoplasmic side</orientation>
    </subcellularLocation>
</comment>
<comment type="similarity">
    <text evidence="1">Belongs to the TRAFAC class translation factor GTPase superfamily. Classic translation factor GTPase family. LepA subfamily.</text>
</comment>
<name>LEPA_AYWBP</name>
<gene>
    <name evidence="1" type="primary">lepA</name>
    <name type="ordered locus">AYWB_330</name>
</gene>
<reference key="1">
    <citation type="journal article" date="2006" name="J. Bacteriol.">
        <title>Living with genome instability: the adaptation of phytoplasmas to diverse environments of their insect and plant hosts.</title>
        <authorList>
            <person name="Bai X."/>
            <person name="Zhang J."/>
            <person name="Ewing A."/>
            <person name="Miller S.A."/>
            <person name="Jancso Radek A."/>
            <person name="Shevchenko D.V."/>
            <person name="Tsukerman K."/>
            <person name="Walunas T."/>
            <person name="Lapidus A."/>
            <person name="Campbell J.W."/>
            <person name="Hogenhout S.A."/>
        </authorList>
    </citation>
    <scope>NUCLEOTIDE SEQUENCE [LARGE SCALE GENOMIC DNA]</scope>
    <source>
        <strain>AYWB</strain>
    </source>
</reference>
<organism>
    <name type="scientific">Aster yellows witches'-broom phytoplasma (strain AYWB)</name>
    <dbReference type="NCBI Taxonomy" id="322098"/>
    <lineage>
        <taxon>Bacteria</taxon>
        <taxon>Bacillati</taxon>
        <taxon>Mycoplasmatota</taxon>
        <taxon>Mollicutes</taxon>
        <taxon>Acholeplasmatales</taxon>
        <taxon>Acholeplasmataceae</taxon>
        <taxon>Candidatus Phytoplasma</taxon>
        <taxon>16SrI (Aster yellows group)</taxon>
    </lineage>
</organism>
<dbReference type="EC" id="3.6.5.n1" evidence="1"/>
<dbReference type="EMBL" id="CP000061">
    <property type="protein sequence ID" value="ABC65447.1"/>
    <property type="molecule type" value="Genomic_DNA"/>
</dbReference>
<dbReference type="RefSeq" id="WP_011412611.1">
    <property type="nucleotide sequence ID" value="NC_007716.1"/>
</dbReference>
<dbReference type="SMR" id="Q2NJE6"/>
<dbReference type="STRING" id="322098.AYWB_330"/>
<dbReference type="KEGG" id="ayw:AYWB_330"/>
<dbReference type="eggNOG" id="COG0481">
    <property type="taxonomic scope" value="Bacteria"/>
</dbReference>
<dbReference type="HOGENOM" id="CLU_009995_3_3_14"/>
<dbReference type="OrthoDB" id="9804431at2"/>
<dbReference type="PhylomeDB" id="Q2NJE6"/>
<dbReference type="Proteomes" id="UP000001934">
    <property type="component" value="Chromosome"/>
</dbReference>
<dbReference type="GO" id="GO:0005886">
    <property type="term" value="C:plasma membrane"/>
    <property type="evidence" value="ECO:0007669"/>
    <property type="project" value="UniProtKB-SubCell"/>
</dbReference>
<dbReference type="GO" id="GO:0005525">
    <property type="term" value="F:GTP binding"/>
    <property type="evidence" value="ECO:0007669"/>
    <property type="project" value="UniProtKB-UniRule"/>
</dbReference>
<dbReference type="GO" id="GO:0003924">
    <property type="term" value="F:GTPase activity"/>
    <property type="evidence" value="ECO:0007669"/>
    <property type="project" value="UniProtKB-UniRule"/>
</dbReference>
<dbReference type="GO" id="GO:0043022">
    <property type="term" value="F:ribosome binding"/>
    <property type="evidence" value="ECO:0007669"/>
    <property type="project" value="UniProtKB-UniRule"/>
</dbReference>
<dbReference type="GO" id="GO:0003746">
    <property type="term" value="F:translation elongation factor activity"/>
    <property type="evidence" value="ECO:0007669"/>
    <property type="project" value="UniProtKB-UniRule"/>
</dbReference>
<dbReference type="GO" id="GO:0045727">
    <property type="term" value="P:positive regulation of translation"/>
    <property type="evidence" value="ECO:0007669"/>
    <property type="project" value="UniProtKB-UniRule"/>
</dbReference>
<dbReference type="CDD" id="cd03699">
    <property type="entry name" value="EF4_II"/>
    <property type="match status" value="1"/>
</dbReference>
<dbReference type="CDD" id="cd16260">
    <property type="entry name" value="EF4_III"/>
    <property type="match status" value="1"/>
</dbReference>
<dbReference type="CDD" id="cd01890">
    <property type="entry name" value="LepA"/>
    <property type="match status" value="1"/>
</dbReference>
<dbReference type="CDD" id="cd03709">
    <property type="entry name" value="lepA_C"/>
    <property type="match status" value="1"/>
</dbReference>
<dbReference type="FunFam" id="3.40.50.300:FF:000078">
    <property type="entry name" value="Elongation factor 4"/>
    <property type="match status" value="1"/>
</dbReference>
<dbReference type="FunFam" id="2.40.30.10:FF:000015">
    <property type="entry name" value="Translation factor GUF1, mitochondrial"/>
    <property type="match status" value="1"/>
</dbReference>
<dbReference type="FunFam" id="3.30.70.240:FF:000007">
    <property type="entry name" value="Translation factor GUF1, mitochondrial"/>
    <property type="match status" value="1"/>
</dbReference>
<dbReference type="FunFam" id="3.30.70.2570:FF:000001">
    <property type="entry name" value="Translation factor GUF1, mitochondrial"/>
    <property type="match status" value="1"/>
</dbReference>
<dbReference type="FunFam" id="3.30.70.870:FF:000004">
    <property type="entry name" value="Translation factor GUF1, mitochondrial"/>
    <property type="match status" value="1"/>
</dbReference>
<dbReference type="Gene3D" id="3.30.70.240">
    <property type="match status" value="1"/>
</dbReference>
<dbReference type="Gene3D" id="3.30.70.2570">
    <property type="entry name" value="Elongation factor 4, C-terminal domain"/>
    <property type="match status" value="1"/>
</dbReference>
<dbReference type="Gene3D" id="3.30.70.870">
    <property type="entry name" value="Elongation Factor G (Translational Gtpase), domain 3"/>
    <property type="match status" value="1"/>
</dbReference>
<dbReference type="Gene3D" id="3.40.50.300">
    <property type="entry name" value="P-loop containing nucleotide triphosphate hydrolases"/>
    <property type="match status" value="1"/>
</dbReference>
<dbReference type="Gene3D" id="2.40.30.10">
    <property type="entry name" value="Translation factors"/>
    <property type="match status" value="1"/>
</dbReference>
<dbReference type="HAMAP" id="MF_00071">
    <property type="entry name" value="LepA"/>
    <property type="match status" value="1"/>
</dbReference>
<dbReference type="InterPro" id="IPR006297">
    <property type="entry name" value="EF-4"/>
</dbReference>
<dbReference type="InterPro" id="IPR035647">
    <property type="entry name" value="EFG_III/V"/>
</dbReference>
<dbReference type="InterPro" id="IPR000640">
    <property type="entry name" value="EFG_V-like"/>
</dbReference>
<dbReference type="InterPro" id="IPR004161">
    <property type="entry name" value="EFTu-like_2"/>
</dbReference>
<dbReference type="InterPro" id="IPR031157">
    <property type="entry name" value="G_TR_CS"/>
</dbReference>
<dbReference type="InterPro" id="IPR038363">
    <property type="entry name" value="LepA_C_sf"/>
</dbReference>
<dbReference type="InterPro" id="IPR013842">
    <property type="entry name" value="LepA_CTD"/>
</dbReference>
<dbReference type="InterPro" id="IPR035654">
    <property type="entry name" value="LepA_IV"/>
</dbReference>
<dbReference type="InterPro" id="IPR027417">
    <property type="entry name" value="P-loop_NTPase"/>
</dbReference>
<dbReference type="InterPro" id="IPR005225">
    <property type="entry name" value="Small_GTP-bd"/>
</dbReference>
<dbReference type="InterPro" id="IPR000795">
    <property type="entry name" value="T_Tr_GTP-bd_dom"/>
</dbReference>
<dbReference type="NCBIfam" id="TIGR01393">
    <property type="entry name" value="lepA"/>
    <property type="match status" value="1"/>
</dbReference>
<dbReference type="NCBIfam" id="TIGR00231">
    <property type="entry name" value="small_GTP"/>
    <property type="match status" value="1"/>
</dbReference>
<dbReference type="PANTHER" id="PTHR43512:SF4">
    <property type="entry name" value="TRANSLATION FACTOR GUF1 HOMOLOG, CHLOROPLASTIC"/>
    <property type="match status" value="1"/>
</dbReference>
<dbReference type="PANTHER" id="PTHR43512">
    <property type="entry name" value="TRANSLATION FACTOR GUF1-RELATED"/>
    <property type="match status" value="1"/>
</dbReference>
<dbReference type="Pfam" id="PF00679">
    <property type="entry name" value="EFG_C"/>
    <property type="match status" value="1"/>
</dbReference>
<dbReference type="Pfam" id="PF00009">
    <property type="entry name" value="GTP_EFTU"/>
    <property type="match status" value="1"/>
</dbReference>
<dbReference type="Pfam" id="PF03144">
    <property type="entry name" value="GTP_EFTU_D2"/>
    <property type="match status" value="1"/>
</dbReference>
<dbReference type="Pfam" id="PF06421">
    <property type="entry name" value="LepA_C"/>
    <property type="match status" value="1"/>
</dbReference>
<dbReference type="PRINTS" id="PR00315">
    <property type="entry name" value="ELONGATNFCT"/>
</dbReference>
<dbReference type="SMART" id="SM00838">
    <property type="entry name" value="EFG_C"/>
    <property type="match status" value="1"/>
</dbReference>
<dbReference type="SUPFAM" id="SSF54980">
    <property type="entry name" value="EF-G C-terminal domain-like"/>
    <property type="match status" value="2"/>
</dbReference>
<dbReference type="SUPFAM" id="SSF52540">
    <property type="entry name" value="P-loop containing nucleoside triphosphate hydrolases"/>
    <property type="match status" value="1"/>
</dbReference>
<dbReference type="PROSITE" id="PS00301">
    <property type="entry name" value="G_TR_1"/>
    <property type="match status" value="1"/>
</dbReference>
<dbReference type="PROSITE" id="PS51722">
    <property type="entry name" value="G_TR_2"/>
    <property type="match status" value="1"/>
</dbReference>
<feature type="chain" id="PRO_0000265638" description="Elongation factor 4">
    <location>
        <begin position="1"/>
        <end position="605"/>
    </location>
</feature>
<feature type="domain" description="tr-type G">
    <location>
        <begin position="11"/>
        <end position="193"/>
    </location>
</feature>
<feature type="binding site" evidence="1">
    <location>
        <begin position="23"/>
        <end position="28"/>
    </location>
    <ligand>
        <name>GTP</name>
        <dbReference type="ChEBI" id="CHEBI:37565"/>
    </ligand>
</feature>
<feature type="binding site" evidence="1">
    <location>
        <begin position="140"/>
        <end position="143"/>
    </location>
    <ligand>
        <name>GTP</name>
        <dbReference type="ChEBI" id="CHEBI:37565"/>
    </ligand>
</feature>
<proteinExistence type="inferred from homology"/>
<evidence type="ECO:0000255" key="1">
    <source>
        <dbReference type="HAMAP-Rule" id="MF_00071"/>
    </source>
</evidence>
<accession>Q2NJE6</accession>
<keyword id="KW-1003">Cell membrane</keyword>
<keyword id="KW-0342">GTP-binding</keyword>
<keyword id="KW-0378">Hydrolase</keyword>
<keyword id="KW-0472">Membrane</keyword>
<keyword id="KW-0547">Nucleotide-binding</keyword>
<keyword id="KW-0648">Protein biosynthesis</keyword>
<protein>
    <recommendedName>
        <fullName evidence="1">Elongation factor 4</fullName>
        <shortName evidence="1">EF-4</shortName>
        <ecNumber evidence="1">3.6.5.n1</ecNumber>
    </recommendedName>
    <alternativeName>
        <fullName evidence="1">Ribosomal back-translocase LepA</fullName>
    </alternativeName>
</protein>